<sequence>MTDNAYPKLAGGAPDLPALELEVLDYWSRDDTFRASIARRDGAPEYVFYDGPPFANGLPHYGHLLTGYVKDIVPRYRTMRGYKVERRFGWDTHGLPAELEVERQLGITDKSQIEAMGIAAFNDACRASVLRYTDEWQAYVTRQARWVDFDNDYKTLDLAYMESVIWAFKQLWDKGLAYEGYRVLPYCWRDETPLSNHELRMDDDVYQSRQDPAVTVGFKVVGGQPDNGLDGAYLLVWTTTPWTLPSNLAVAVSPDITYVQVQAGDRRFVLAEARLAAYARELGEEPVVLGTYRGAELLGTRYLPPFAYFMDWPNAFQVLAGDFVTTDDGTGIVHMAPAYGEDDMVVAEAVGIAPVTPVDSKGRFDVTVADYQGQHVFDANAQIVRDLKTQSGPAAVNGPVLIRHETYEHPYPHCWRCRNPLIYRSVSSWFVRVTDFRDRMVELNQQITWYPEHVKDGQFGKWLQGARDWSISRNRYWGTPIPVWKSDDPAYPRIDVYGSLDELERDFGVRPANLHRPYIDELTRPNPDDPTGRSTMRRIPDVLDVWFDSGSMPYAQVHYPFENLDWFQGHYPGDFIVEYIGQTRGWFYTLHVLATALFDRPAFKTCVAHGIVLGFDGQKMSKSLRNYPDVTEVFDRDGSDAMRWFLMASPILRGGNLIVTEQGIRDGVRQVLLPLWNTYSFLALYAPKVGTWRVDSVHVLDRYILAKLAVLRDDLSESMEVYDIPGACEHLRQFTEALTNWYVRRSRSRFWAEDADAIDTLHTVLEVTTRLAAPLLPLITEIIWRGLTRERSVHLTDWPAPDLLPSDADLVAAMDQVRDVCSAASSLRKAKKLRVRLPLPKLIVAVENPQLLRPFVDLIGDELNVKQVELTDAIDTYGRFELTVNARVAGPRLGKDVQAAIKAVKAGDGVINPDGTLLAGPAVLTPDEYNSRLVAADPESTAALPDGAGLVVLDGTVTAELEAEGWAKDRIRELQELRKSTGLDVSDRIRVVMSVPAEREDWARTHRDLIAGEILATDFEFADLADGVAIGDGVRVSIEKT</sequence>
<name>SYI_MYCTU</name>
<reference key="1">
    <citation type="journal article" date="1998" name="Nature">
        <title>Deciphering the biology of Mycobacterium tuberculosis from the complete genome sequence.</title>
        <authorList>
            <person name="Cole S.T."/>
            <person name="Brosch R."/>
            <person name="Parkhill J."/>
            <person name="Garnier T."/>
            <person name="Churcher C.M."/>
            <person name="Harris D.E."/>
            <person name="Gordon S.V."/>
            <person name="Eiglmeier K."/>
            <person name="Gas S."/>
            <person name="Barry C.E. III"/>
            <person name="Tekaia F."/>
            <person name="Badcock K."/>
            <person name="Basham D."/>
            <person name="Brown D."/>
            <person name="Chillingworth T."/>
            <person name="Connor R."/>
            <person name="Davies R.M."/>
            <person name="Devlin K."/>
            <person name="Feltwell T."/>
            <person name="Gentles S."/>
            <person name="Hamlin N."/>
            <person name="Holroyd S."/>
            <person name="Hornsby T."/>
            <person name="Jagels K."/>
            <person name="Krogh A."/>
            <person name="McLean J."/>
            <person name="Moule S."/>
            <person name="Murphy L.D."/>
            <person name="Oliver S."/>
            <person name="Osborne J."/>
            <person name="Quail M.A."/>
            <person name="Rajandream M.A."/>
            <person name="Rogers J."/>
            <person name="Rutter S."/>
            <person name="Seeger K."/>
            <person name="Skelton S."/>
            <person name="Squares S."/>
            <person name="Squares R."/>
            <person name="Sulston J.E."/>
            <person name="Taylor K."/>
            <person name="Whitehead S."/>
            <person name="Barrell B.G."/>
        </authorList>
    </citation>
    <scope>NUCLEOTIDE SEQUENCE [LARGE SCALE GENOMIC DNA]</scope>
    <source>
        <strain>ATCC 25618 / H37Rv</strain>
    </source>
</reference>
<reference key="2">
    <citation type="journal article" date="1996" name="Biochemistry">
        <title>A eubacterial Mycobacterium tuberculosis tRNA synthetase is eukaryote-like and resistant to a eubacterial-specific antisynthetase drug.</title>
        <authorList>
            <person name="Sassanfar M."/>
            <person name="Kranz J.E."/>
            <person name="Gallant P."/>
            <person name="Schimmel P."/>
            <person name="Shiba K."/>
        </authorList>
    </citation>
    <scope>CATALYTIC ACTIVITY</scope>
    <scope>RESISTANCE TO MUPIROCIN</scope>
</reference>
<reference key="3">
    <citation type="journal article" date="2011" name="Mol. Cell. Proteomics">
        <title>Proteogenomic analysis of Mycobacterium tuberculosis by high resolution mass spectrometry.</title>
        <authorList>
            <person name="Kelkar D.S."/>
            <person name="Kumar D."/>
            <person name="Kumar P."/>
            <person name="Balakrishnan L."/>
            <person name="Muthusamy B."/>
            <person name="Yadav A.K."/>
            <person name="Shrivastava P."/>
            <person name="Marimuthu A."/>
            <person name="Anand S."/>
            <person name="Sundaram H."/>
            <person name="Kingsbury R."/>
            <person name="Harsha H.C."/>
            <person name="Nair B."/>
            <person name="Prasad T.S."/>
            <person name="Chauhan D.S."/>
            <person name="Katoch K."/>
            <person name="Katoch V.M."/>
            <person name="Kumar P."/>
            <person name="Chaerkady R."/>
            <person name="Ramachandran S."/>
            <person name="Dash D."/>
            <person name="Pandey A."/>
        </authorList>
    </citation>
    <scope>IDENTIFICATION BY MASS SPECTROMETRY [LARGE SCALE ANALYSIS]</scope>
    <source>
        <strain>ATCC 25618 / H37Rv</strain>
    </source>
</reference>
<evidence type="ECO:0000250" key="1"/>
<evidence type="ECO:0000269" key="2">
    <source>
    </source>
</evidence>
<evidence type="ECO:0000305" key="3"/>
<comment type="function">
    <text evidence="1">Catalyzes the attachment of isoleucine to tRNA(Ile). As IleRS can inadvertently accommodate and process structurally similar amino acids such as valine, to avoid such errors it has two additional distinct tRNA(Ile)-dependent editing activities. One activity is designated as 'pretransfer' editing and involves the hydrolysis of activated Val-AMP. The other activity is designated 'posttransfer' editing and involves deacylation of mischarged Val-tRNA(Ile) (By similarity).</text>
</comment>
<comment type="function">
    <text>Confers high-level resistance to the antibiotic mupirocin (pseudomonic acid A), an Ile-analog that competitively inhibits activation by Ile-tRNA synthetase, thus inhibiting protein biosynthesis.</text>
</comment>
<comment type="catalytic activity">
    <reaction evidence="2">
        <text>tRNA(Ile) + L-isoleucine + ATP = L-isoleucyl-tRNA(Ile) + AMP + diphosphate</text>
        <dbReference type="Rhea" id="RHEA:11060"/>
        <dbReference type="Rhea" id="RHEA-COMP:9666"/>
        <dbReference type="Rhea" id="RHEA-COMP:9695"/>
        <dbReference type="ChEBI" id="CHEBI:30616"/>
        <dbReference type="ChEBI" id="CHEBI:33019"/>
        <dbReference type="ChEBI" id="CHEBI:58045"/>
        <dbReference type="ChEBI" id="CHEBI:78442"/>
        <dbReference type="ChEBI" id="CHEBI:78528"/>
        <dbReference type="ChEBI" id="CHEBI:456215"/>
        <dbReference type="EC" id="6.1.1.5"/>
    </reaction>
</comment>
<comment type="cofactor">
    <cofactor evidence="1">
        <name>Zn(2+)</name>
        <dbReference type="ChEBI" id="CHEBI:29105"/>
    </cofactor>
</comment>
<comment type="subunit">
    <text evidence="1">Monomer.</text>
</comment>
<comment type="subcellular location">
    <subcellularLocation>
        <location>Cytoplasm</location>
    </subcellularLocation>
</comment>
<comment type="domain">
    <text evidence="1">IleRS has two distinct active sites: one for aminoacylation and one for editing. The misactivated valine is translocated from the active site to the editing site, which sterically excludes the correctly activated isoleucine. The single editing site contains two valyl binding pockets, one specific for each substrate (Val-AMP or Val-tRNA(Ile)) (By similarity).</text>
</comment>
<comment type="similarity">
    <text evidence="3">Belongs to the class-I aminoacyl-tRNA synthetase family. IleS type 2 subfamily.</text>
</comment>
<keyword id="KW-0030">Aminoacyl-tRNA synthetase</keyword>
<keyword id="KW-0046">Antibiotic resistance</keyword>
<keyword id="KW-0067">ATP-binding</keyword>
<keyword id="KW-0963">Cytoplasm</keyword>
<keyword id="KW-0436">Ligase</keyword>
<keyword id="KW-0479">Metal-binding</keyword>
<keyword id="KW-0547">Nucleotide-binding</keyword>
<keyword id="KW-0648">Protein biosynthesis</keyword>
<keyword id="KW-1185">Reference proteome</keyword>
<keyword id="KW-0862">Zinc</keyword>
<organism>
    <name type="scientific">Mycobacterium tuberculosis (strain ATCC 25618 / H37Rv)</name>
    <dbReference type="NCBI Taxonomy" id="83332"/>
    <lineage>
        <taxon>Bacteria</taxon>
        <taxon>Bacillati</taxon>
        <taxon>Actinomycetota</taxon>
        <taxon>Actinomycetes</taxon>
        <taxon>Mycobacteriales</taxon>
        <taxon>Mycobacteriaceae</taxon>
        <taxon>Mycobacterium</taxon>
        <taxon>Mycobacterium tuberculosis complex</taxon>
    </lineage>
</organism>
<protein>
    <recommendedName>
        <fullName>Isoleucine--tRNA ligase</fullName>
        <ecNumber>6.1.1.5</ecNumber>
    </recommendedName>
    <alternativeName>
        <fullName>Isoleucyl-tRNA synthetase</fullName>
        <shortName>IleRS</shortName>
    </alternativeName>
</protein>
<feature type="chain" id="PRO_0000098550" description="Isoleucine--tRNA ligase">
    <location>
        <begin position="1"/>
        <end position="1041"/>
    </location>
</feature>
<feature type="short sequence motif" description="'HIGH' region">
    <location>
        <begin position="53"/>
        <end position="63"/>
    </location>
</feature>
<feature type="short sequence motif" description="'KMSKS' region">
    <location>
        <begin position="619"/>
        <end position="623"/>
    </location>
</feature>
<feature type="binding site" evidence="1">
    <location>
        <position position="622"/>
    </location>
    <ligand>
        <name>ATP</name>
        <dbReference type="ChEBI" id="CHEBI:30616"/>
    </ligand>
</feature>
<proteinExistence type="evidence at protein level"/>
<accession>P9WFV3</accession>
<accession>L0T8J7</accession>
<accession>O06181</accession>
<accession>Q10765</accession>
<dbReference type="EC" id="6.1.1.5"/>
<dbReference type="EMBL" id="AL123456">
    <property type="protein sequence ID" value="CCP44300.1"/>
    <property type="molecule type" value="Genomic_DNA"/>
</dbReference>
<dbReference type="PIR" id="E70760">
    <property type="entry name" value="E70760"/>
</dbReference>
<dbReference type="RefSeq" id="NP_216052.1">
    <property type="nucleotide sequence ID" value="NC_000962.3"/>
</dbReference>
<dbReference type="RefSeq" id="WP_003407714.1">
    <property type="nucleotide sequence ID" value="NZ_NVQJ01000004.1"/>
</dbReference>
<dbReference type="SMR" id="P9WFV3"/>
<dbReference type="FunCoup" id="P9WFV3">
    <property type="interactions" value="479"/>
</dbReference>
<dbReference type="STRING" id="83332.Rv1536"/>
<dbReference type="PaxDb" id="83332-Rv1536"/>
<dbReference type="DNASU" id="886412"/>
<dbReference type="GeneID" id="886412"/>
<dbReference type="KEGG" id="mtu:Rv1536"/>
<dbReference type="KEGG" id="mtv:RVBD_1536"/>
<dbReference type="TubercuList" id="Rv1536"/>
<dbReference type="eggNOG" id="COG0060">
    <property type="taxonomic scope" value="Bacteria"/>
</dbReference>
<dbReference type="InParanoid" id="P9WFV3"/>
<dbReference type="OrthoDB" id="9810365at2"/>
<dbReference type="PhylomeDB" id="P9WFV3"/>
<dbReference type="Proteomes" id="UP000001584">
    <property type="component" value="Chromosome"/>
</dbReference>
<dbReference type="GO" id="GO:0005737">
    <property type="term" value="C:cytoplasm"/>
    <property type="evidence" value="ECO:0007669"/>
    <property type="project" value="UniProtKB-SubCell"/>
</dbReference>
<dbReference type="GO" id="GO:0009274">
    <property type="term" value="C:peptidoglycan-based cell wall"/>
    <property type="evidence" value="ECO:0007005"/>
    <property type="project" value="MTBBASE"/>
</dbReference>
<dbReference type="GO" id="GO:0005886">
    <property type="term" value="C:plasma membrane"/>
    <property type="evidence" value="ECO:0007005"/>
    <property type="project" value="MTBBASE"/>
</dbReference>
<dbReference type="GO" id="GO:0002161">
    <property type="term" value="F:aminoacyl-tRNA deacylase activity"/>
    <property type="evidence" value="ECO:0007669"/>
    <property type="project" value="InterPro"/>
</dbReference>
<dbReference type="GO" id="GO:0005524">
    <property type="term" value="F:ATP binding"/>
    <property type="evidence" value="ECO:0007669"/>
    <property type="project" value="UniProtKB-UniRule"/>
</dbReference>
<dbReference type="GO" id="GO:0004822">
    <property type="term" value="F:isoleucine-tRNA ligase activity"/>
    <property type="evidence" value="ECO:0000315"/>
    <property type="project" value="MTBBASE"/>
</dbReference>
<dbReference type="GO" id="GO:0000049">
    <property type="term" value="F:tRNA binding"/>
    <property type="evidence" value="ECO:0007669"/>
    <property type="project" value="InterPro"/>
</dbReference>
<dbReference type="GO" id="GO:0008270">
    <property type="term" value="F:zinc ion binding"/>
    <property type="evidence" value="ECO:0007669"/>
    <property type="project" value="UniProtKB-UniRule"/>
</dbReference>
<dbReference type="GO" id="GO:0006428">
    <property type="term" value="P:isoleucyl-tRNA aminoacylation"/>
    <property type="evidence" value="ECO:0000315"/>
    <property type="project" value="MTBBASE"/>
</dbReference>
<dbReference type="GO" id="GO:0046677">
    <property type="term" value="P:response to antibiotic"/>
    <property type="evidence" value="ECO:0007669"/>
    <property type="project" value="UniProtKB-KW"/>
</dbReference>
<dbReference type="CDD" id="cd07961">
    <property type="entry name" value="Anticodon_Ia_Ile_ABEc"/>
    <property type="match status" value="1"/>
</dbReference>
<dbReference type="CDD" id="cd00818">
    <property type="entry name" value="IleRS_core"/>
    <property type="match status" value="1"/>
</dbReference>
<dbReference type="FunFam" id="3.40.50.620:FF:000063">
    <property type="entry name" value="Isoleucine--tRNA ligase"/>
    <property type="match status" value="1"/>
</dbReference>
<dbReference type="FunFam" id="3.40.50.620:FF:000075">
    <property type="entry name" value="Isoleucine--tRNA ligase"/>
    <property type="match status" value="1"/>
</dbReference>
<dbReference type="Gene3D" id="3.40.50.620">
    <property type="entry name" value="HUPs"/>
    <property type="match status" value="2"/>
</dbReference>
<dbReference type="Gene3D" id="1.10.730.10">
    <property type="entry name" value="Isoleucyl-tRNA Synthetase, Domain 1"/>
    <property type="match status" value="1"/>
</dbReference>
<dbReference type="Gene3D" id="3.90.740.10">
    <property type="entry name" value="Valyl/Leucyl/Isoleucyl-tRNA synthetase, editing domain"/>
    <property type="match status" value="1"/>
</dbReference>
<dbReference type="HAMAP" id="MF_02003">
    <property type="entry name" value="Ile_tRNA_synth_type2"/>
    <property type="match status" value="1"/>
</dbReference>
<dbReference type="InterPro" id="IPR001412">
    <property type="entry name" value="aa-tRNA-synth_I_CS"/>
</dbReference>
<dbReference type="InterPro" id="IPR002300">
    <property type="entry name" value="aa-tRNA-synth_Ia"/>
</dbReference>
<dbReference type="InterPro" id="IPR033709">
    <property type="entry name" value="Anticodon_Ile_ABEc"/>
</dbReference>
<dbReference type="InterPro" id="IPR002301">
    <property type="entry name" value="Ile-tRNA-ligase"/>
</dbReference>
<dbReference type="InterPro" id="IPR023586">
    <property type="entry name" value="Ile-tRNA-ligase_type2"/>
</dbReference>
<dbReference type="InterPro" id="IPR013155">
    <property type="entry name" value="M/V/L/I-tRNA-synth_anticd-bd"/>
</dbReference>
<dbReference type="InterPro" id="IPR014729">
    <property type="entry name" value="Rossmann-like_a/b/a_fold"/>
</dbReference>
<dbReference type="InterPro" id="IPR009080">
    <property type="entry name" value="tRNAsynth_Ia_anticodon-bd"/>
</dbReference>
<dbReference type="InterPro" id="IPR009008">
    <property type="entry name" value="Val/Leu/Ile-tRNA-synth_edit"/>
</dbReference>
<dbReference type="NCBIfam" id="TIGR00392">
    <property type="entry name" value="ileS"/>
    <property type="match status" value="1"/>
</dbReference>
<dbReference type="PANTHER" id="PTHR42780:SF1">
    <property type="entry name" value="ISOLEUCINE--TRNA LIGASE, CYTOPLASMIC"/>
    <property type="match status" value="1"/>
</dbReference>
<dbReference type="PANTHER" id="PTHR42780">
    <property type="entry name" value="SOLEUCYL-TRNA SYNTHETASE"/>
    <property type="match status" value="1"/>
</dbReference>
<dbReference type="Pfam" id="PF08264">
    <property type="entry name" value="Anticodon_1"/>
    <property type="match status" value="1"/>
</dbReference>
<dbReference type="Pfam" id="PF19302">
    <property type="entry name" value="DUF5915"/>
    <property type="match status" value="1"/>
</dbReference>
<dbReference type="Pfam" id="PF00133">
    <property type="entry name" value="tRNA-synt_1"/>
    <property type="match status" value="1"/>
</dbReference>
<dbReference type="PRINTS" id="PR00984">
    <property type="entry name" value="TRNASYNTHILE"/>
</dbReference>
<dbReference type="SUPFAM" id="SSF47323">
    <property type="entry name" value="Anticodon-binding domain of a subclass of class I aminoacyl-tRNA synthetases"/>
    <property type="match status" value="1"/>
</dbReference>
<dbReference type="SUPFAM" id="SSF52374">
    <property type="entry name" value="Nucleotidylyl transferase"/>
    <property type="match status" value="1"/>
</dbReference>
<dbReference type="SUPFAM" id="SSF50677">
    <property type="entry name" value="ValRS/IleRS/LeuRS editing domain"/>
    <property type="match status" value="1"/>
</dbReference>
<dbReference type="PROSITE" id="PS00178">
    <property type="entry name" value="AA_TRNA_LIGASE_I"/>
    <property type="match status" value="1"/>
</dbReference>
<gene>
    <name type="primary">ileS</name>
    <name type="ordered locus">Rv1536</name>
    <name type="ORF">MTCY48.29c</name>
</gene>